<reference key="1">
    <citation type="submission" date="2003-03" db="EMBL/GenBank/DDBJ databases">
        <title>The complete genome sequence of Neisseria gonorrhoeae.</title>
        <authorList>
            <person name="Lewis L.A."/>
            <person name="Gillaspy A.F."/>
            <person name="McLaughlin R.E."/>
            <person name="Gipson M."/>
            <person name="Ducey T.F."/>
            <person name="Ownbey T."/>
            <person name="Hartman K."/>
            <person name="Nydick C."/>
            <person name="Carson M.B."/>
            <person name="Vaughn J."/>
            <person name="Thomson C."/>
            <person name="Song L."/>
            <person name="Lin S."/>
            <person name="Yuan X."/>
            <person name="Najar F."/>
            <person name="Zhan M."/>
            <person name="Ren Q."/>
            <person name="Zhu H."/>
            <person name="Qi S."/>
            <person name="Kenton S.M."/>
            <person name="Lai H."/>
            <person name="White J.D."/>
            <person name="Clifton S."/>
            <person name="Roe B.A."/>
            <person name="Dyer D.W."/>
        </authorList>
    </citation>
    <scope>NUCLEOTIDE SEQUENCE [LARGE SCALE GENOMIC DNA]</scope>
    <source>
        <strain>ATCC 700825 / FA 1090</strain>
    </source>
</reference>
<feature type="chain" id="PRO_1000024595" description="ATP-dependent Clp protease ATP-binding subunit ClpX">
    <location>
        <begin position="1"/>
        <end position="414"/>
    </location>
</feature>
<feature type="domain" description="ClpX-type ZB" evidence="2">
    <location>
        <begin position="1"/>
        <end position="49"/>
    </location>
</feature>
<feature type="binding site" evidence="2">
    <location>
        <position position="8"/>
    </location>
    <ligand>
        <name>Zn(2+)</name>
        <dbReference type="ChEBI" id="CHEBI:29105"/>
    </ligand>
</feature>
<feature type="binding site" evidence="2">
    <location>
        <position position="11"/>
    </location>
    <ligand>
        <name>Zn(2+)</name>
        <dbReference type="ChEBI" id="CHEBI:29105"/>
    </ligand>
</feature>
<feature type="binding site" evidence="2">
    <location>
        <position position="30"/>
    </location>
    <ligand>
        <name>Zn(2+)</name>
        <dbReference type="ChEBI" id="CHEBI:29105"/>
    </ligand>
</feature>
<feature type="binding site" evidence="2">
    <location>
        <position position="33"/>
    </location>
    <ligand>
        <name>Zn(2+)</name>
        <dbReference type="ChEBI" id="CHEBI:29105"/>
    </ligand>
</feature>
<feature type="binding site" evidence="1">
    <location>
        <begin position="120"/>
        <end position="127"/>
    </location>
    <ligand>
        <name>ATP</name>
        <dbReference type="ChEBI" id="CHEBI:30616"/>
    </ligand>
</feature>
<evidence type="ECO:0000255" key="1">
    <source>
        <dbReference type="HAMAP-Rule" id="MF_00175"/>
    </source>
</evidence>
<evidence type="ECO:0000255" key="2">
    <source>
        <dbReference type="PROSITE-ProRule" id="PRU01250"/>
    </source>
</evidence>
<proteinExistence type="inferred from homology"/>
<keyword id="KW-0067">ATP-binding</keyword>
<keyword id="KW-0143">Chaperone</keyword>
<keyword id="KW-0479">Metal-binding</keyword>
<keyword id="KW-0547">Nucleotide-binding</keyword>
<keyword id="KW-1185">Reference proteome</keyword>
<keyword id="KW-0862">Zinc</keyword>
<name>CLPX_NEIG1</name>
<organism>
    <name type="scientific">Neisseria gonorrhoeae (strain ATCC 700825 / FA 1090)</name>
    <dbReference type="NCBI Taxonomy" id="242231"/>
    <lineage>
        <taxon>Bacteria</taxon>
        <taxon>Pseudomonadati</taxon>
        <taxon>Pseudomonadota</taxon>
        <taxon>Betaproteobacteria</taxon>
        <taxon>Neisseriales</taxon>
        <taxon>Neisseriaceae</taxon>
        <taxon>Neisseria</taxon>
    </lineage>
</organism>
<accession>Q5F8W5</accession>
<protein>
    <recommendedName>
        <fullName evidence="1">ATP-dependent Clp protease ATP-binding subunit ClpX</fullName>
    </recommendedName>
</protein>
<sequence>MSNENRTCSFCGKSKSHAKHLIEGKNAYICDECVANCLEILYEGDNGGTPPENAGGEPEESGKLPTPAEIVANLDDYVIGQGQAKKALAVAVYNHYKRLRHPKADGGVELSKSNILLIGPTGSGKTLLAQSLARKLDVPFVMADATTLTEAGYVGEDVEQIITKLLGKCDFDVEKARHGIVYIDEIDKISRKSDNPSITRDVSGEGVQQALLKLIEGTVASVPPQGGRKHPNQEFINVDTANILFICGGAFAGLEKVIRQRTEKGGIGFGASVHSKDENAGITKLFGIVEPEDLIKFGLIPELIGRLPVIATLEELDEDALINILTEPKNALVKQYQALFGIENVGLEFEEGALRSIARQAMERKTGARGLRSIVERCLLDTMYRLPDLQGLKKVVVGKAVIEEGREPELVFES</sequence>
<gene>
    <name evidence="1" type="primary">clpX</name>
    <name type="ordered locus">NGO_0645</name>
</gene>
<dbReference type="EMBL" id="AE004969">
    <property type="protein sequence ID" value="AAW89372.1"/>
    <property type="molecule type" value="Genomic_DNA"/>
</dbReference>
<dbReference type="RefSeq" id="WP_003706165.1">
    <property type="nucleotide sequence ID" value="NC_002946.2"/>
</dbReference>
<dbReference type="RefSeq" id="YP_207784.1">
    <property type="nucleotide sequence ID" value="NC_002946.2"/>
</dbReference>
<dbReference type="SMR" id="Q5F8W5"/>
<dbReference type="STRING" id="242231.NGO_0645"/>
<dbReference type="KEGG" id="ngo:NGO_0645"/>
<dbReference type="PATRIC" id="fig|242231.10.peg.760"/>
<dbReference type="HOGENOM" id="CLU_014218_8_2_4"/>
<dbReference type="Proteomes" id="UP000000535">
    <property type="component" value="Chromosome"/>
</dbReference>
<dbReference type="GO" id="GO:0009376">
    <property type="term" value="C:HslUV protease complex"/>
    <property type="evidence" value="ECO:0007669"/>
    <property type="project" value="TreeGrafter"/>
</dbReference>
<dbReference type="GO" id="GO:0005524">
    <property type="term" value="F:ATP binding"/>
    <property type="evidence" value="ECO:0007669"/>
    <property type="project" value="UniProtKB-UniRule"/>
</dbReference>
<dbReference type="GO" id="GO:0016887">
    <property type="term" value="F:ATP hydrolysis activity"/>
    <property type="evidence" value="ECO:0007669"/>
    <property type="project" value="InterPro"/>
</dbReference>
<dbReference type="GO" id="GO:0140662">
    <property type="term" value="F:ATP-dependent protein folding chaperone"/>
    <property type="evidence" value="ECO:0007669"/>
    <property type="project" value="InterPro"/>
</dbReference>
<dbReference type="GO" id="GO:0046983">
    <property type="term" value="F:protein dimerization activity"/>
    <property type="evidence" value="ECO:0007669"/>
    <property type="project" value="InterPro"/>
</dbReference>
<dbReference type="GO" id="GO:0051082">
    <property type="term" value="F:unfolded protein binding"/>
    <property type="evidence" value="ECO:0007669"/>
    <property type="project" value="UniProtKB-UniRule"/>
</dbReference>
<dbReference type="GO" id="GO:0008270">
    <property type="term" value="F:zinc ion binding"/>
    <property type="evidence" value="ECO:0007669"/>
    <property type="project" value="InterPro"/>
</dbReference>
<dbReference type="GO" id="GO:0051301">
    <property type="term" value="P:cell division"/>
    <property type="evidence" value="ECO:0007669"/>
    <property type="project" value="TreeGrafter"/>
</dbReference>
<dbReference type="GO" id="GO:0051603">
    <property type="term" value="P:proteolysis involved in protein catabolic process"/>
    <property type="evidence" value="ECO:0007669"/>
    <property type="project" value="TreeGrafter"/>
</dbReference>
<dbReference type="CDD" id="cd19497">
    <property type="entry name" value="RecA-like_ClpX"/>
    <property type="match status" value="1"/>
</dbReference>
<dbReference type="FunFam" id="1.10.8.60:FF:000002">
    <property type="entry name" value="ATP-dependent Clp protease ATP-binding subunit ClpX"/>
    <property type="match status" value="1"/>
</dbReference>
<dbReference type="FunFam" id="3.40.50.300:FF:000005">
    <property type="entry name" value="ATP-dependent Clp protease ATP-binding subunit ClpX"/>
    <property type="match status" value="1"/>
</dbReference>
<dbReference type="Gene3D" id="1.10.8.60">
    <property type="match status" value="1"/>
</dbReference>
<dbReference type="Gene3D" id="6.20.220.10">
    <property type="entry name" value="ClpX chaperone, C4-type zinc finger domain"/>
    <property type="match status" value="1"/>
</dbReference>
<dbReference type="Gene3D" id="3.40.50.300">
    <property type="entry name" value="P-loop containing nucleotide triphosphate hydrolases"/>
    <property type="match status" value="1"/>
</dbReference>
<dbReference type="HAMAP" id="MF_00175">
    <property type="entry name" value="ClpX"/>
    <property type="match status" value="1"/>
</dbReference>
<dbReference type="InterPro" id="IPR003593">
    <property type="entry name" value="AAA+_ATPase"/>
</dbReference>
<dbReference type="InterPro" id="IPR050052">
    <property type="entry name" value="ATP-dep_Clp_protease_ClpX"/>
</dbReference>
<dbReference type="InterPro" id="IPR003959">
    <property type="entry name" value="ATPase_AAA_core"/>
</dbReference>
<dbReference type="InterPro" id="IPR019489">
    <property type="entry name" value="Clp_ATPase_C"/>
</dbReference>
<dbReference type="InterPro" id="IPR004487">
    <property type="entry name" value="Clp_protease_ATP-bd_su_ClpX"/>
</dbReference>
<dbReference type="InterPro" id="IPR046425">
    <property type="entry name" value="ClpX_bact"/>
</dbReference>
<dbReference type="InterPro" id="IPR027417">
    <property type="entry name" value="P-loop_NTPase"/>
</dbReference>
<dbReference type="InterPro" id="IPR010603">
    <property type="entry name" value="Znf_CppX_C4"/>
</dbReference>
<dbReference type="InterPro" id="IPR038366">
    <property type="entry name" value="Znf_CppX_C4_sf"/>
</dbReference>
<dbReference type="NCBIfam" id="TIGR00382">
    <property type="entry name" value="clpX"/>
    <property type="match status" value="1"/>
</dbReference>
<dbReference type="NCBIfam" id="NF003745">
    <property type="entry name" value="PRK05342.1"/>
    <property type="match status" value="1"/>
</dbReference>
<dbReference type="PANTHER" id="PTHR48102:SF7">
    <property type="entry name" value="ATP-DEPENDENT CLP PROTEASE ATP-BINDING SUBUNIT CLPX-LIKE, MITOCHONDRIAL"/>
    <property type="match status" value="1"/>
</dbReference>
<dbReference type="PANTHER" id="PTHR48102">
    <property type="entry name" value="ATP-DEPENDENT CLP PROTEASE ATP-BINDING SUBUNIT CLPX-LIKE, MITOCHONDRIAL-RELATED"/>
    <property type="match status" value="1"/>
</dbReference>
<dbReference type="Pfam" id="PF07724">
    <property type="entry name" value="AAA_2"/>
    <property type="match status" value="1"/>
</dbReference>
<dbReference type="Pfam" id="PF10431">
    <property type="entry name" value="ClpB_D2-small"/>
    <property type="match status" value="1"/>
</dbReference>
<dbReference type="Pfam" id="PF06689">
    <property type="entry name" value="zf-C4_ClpX"/>
    <property type="match status" value="1"/>
</dbReference>
<dbReference type="SMART" id="SM00382">
    <property type="entry name" value="AAA"/>
    <property type="match status" value="1"/>
</dbReference>
<dbReference type="SMART" id="SM01086">
    <property type="entry name" value="ClpB_D2-small"/>
    <property type="match status" value="1"/>
</dbReference>
<dbReference type="SMART" id="SM00994">
    <property type="entry name" value="zf-C4_ClpX"/>
    <property type="match status" value="1"/>
</dbReference>
<dbReference type="SUPFAM" id="SSF57716">
    <property type="entry name" value="Glucocorticoid receptor-like (DNA-binding domain)"/>
    <property type="match status" value="1"/>
</dbReference>
<dbReference type="SUPFAM" id="SSF52540">
    <property type="entry name" value="P-loop containing nucleoside triphosphate hydrolases"/>
    <property type="match status" value="1"/>
</dbReference>
<dbReference type="PROSITE" id="PS51902">
    <property type="entry name" value="CLPX_ZB"/>
    <property type="match status" value="1"/>
</dbReference>
<comment type="function">
    <text evidence="1">ATP-dependent specificity component of the Clp protease. It directs the protease to specific substrates. Can perform chaperone functions in the absence of ClpP.</text>
</comment>
<comment type="subunit">
    <text evidence="1">Component of the ClpX-ClpP complex. Forms a hexameric ring that, in the presence of ATP, binds to fourteen ClpP subunits assembled into a disk-like structure with a central cavity, resembling the structure of eukaryotic proteasomes.</text>
</comment>
<comment type="similarity">
    <text evidence="1">Belongs to the ClpX chaperone family.</text>
</comment>